<evidence type="ECO:0000250" key="1"/>
<evidence type="ECO:0000255" key="2"/>
<evidence type="ECO:0000305" key="3"/>
<protein>
    <recommendedName>
        <fullName>Cytosol aminopeptidase</fullName>
        <ecNumber>3.4.11.1</ecNumber>
    </recommendedName>
    <alternativeName>
        <fullName>Leucine aminopeptidase</fullName>
        <shortName>LAP</shortName>
        <ecNumber>3.4.11.10</ecNumber>
    </alternativeName>
    <alternativeName>
        <fullName>Leucyl aminopeptidase</fullName>
    </alternativeName>
</protein>
<gene>
    <name type="primary">pepA</name>
    <name type="ordered locus">jhp_0517</name>
</gene>
<dbReference type="EC" id="3.4.11.1"/>
<dbReference type="EC" id="3.4.11.10"/>
<dbReference type="EMBL" id="AE001439">
    <property type="protein sequence ID" value="AAD06098.1"/>
    <property type="molecule type" value="Genomic_DNA"/>
</dbReference>
<dbReference type="PIR" id="F71920">
    <property type="entry name" value="F71920"/>
</dbReference>
<dbReference type="RefSeq" id="WP_000912895.1">
    <property type="nucleotide sequence ID" value="NC_000921.1"/>
</dbReference>
<dbReference type="SMR" id="Q9ZLR1"/>
<dbReference type="MEROPS" id="M17.016"/>
<dbReference type="KEGG" id="hpj:jhp_0517"/>
<dbReference type="eggNOG" id="COG0260">
    <property type="taxonomic scope" value="Bacteria"/>
</dbReference>
<dbReference type="Proteomes" id="UP000000804">
    <property type="component" value="Chromosome"/>
</dbReference>
<dbReference type="GO" id="GO:0005737">
    <property type="term" value="C:cytoplasm"/>
    <property type="evidence" value="ECO:0007669"/>
    <property type="project" value="UniProtKB-SubCell"/>
</dbReference>
<dbReference type="GO" id="GO:0030145">
    <property type="term" value="F:manganese ion binding"/>
    <property type="evidence" value="ECO:0007669"/>
    <property type="project" value="UniProtKB-UniRule"/>
</dbReference>
<dbReference type="GO" id="GO:0070006">
    <property type="term" value="F:metalloaminopeptidase activity"/>
    <property type="evidence" value="ECO:0007669"/>
    <property type="project" value="InterPro"/>
</dbReference>
<dbReference type="GO" id="GO:0006508">
    <property type="term" value="P:proteolysis"/>
    <property type="evidence" value="ECO:0007669"/>
    <property type="project" value="UniProtKB-KW"/>
</dbReference>
<dbReference type="CDD" id="cd00433">
    <property type="entry name" value="Peptidase_M17"/>
    <property type="match status" value="1"/>
</dbReference>
<dbReference type="Gene3D" id="3.40.220.10">
    <property type="entry name" value="Leucine Aminopeptidase, subunit E, domain 1"/>
    <property type="match status" value="1"/>
</dbReference>
<dbReference type="Gene3D" id="3.40.630.10">
    <property type="entry name" value="Zn peptidases"/>
    <property type="match status" value="1"/>
</dbReference>
<dbReference type="HAMAP" id="MF_00181">
    <property type="entry name" value="Cytosol_peptidase_M17"/>
    <property type="match status" value="1"/>
</dbReference>
<dbReference type="InterPro" id="IPR011356">
    <property type="entry name" value="Leucine_aapep/pepB"/>
</dbReference>
<dbReference type="InterPro" id="IPR043472">
    <property type="entry name" value="Macro_dom-like"/>
</dbReference>
<dbReference type="InterPro" id="IPR000819">
    <property type="entry name" value="Peptidase_M17_C"/>
</dbReference>
<dbReference type="InterPro" id="IPR023042">
    <property type="entry name" value="Peptidase_M17_leu_NH2_pept"/>
</dbReference>
<dbReference type="InterPro" id="IPR008283">
    <property type="entry name" value="Peptidase_M17_N"/>
</dbReference>
<dbReference type="NCBIfam" id="NF002079">
    <property type="entry name" value="PRK00913.3-1"/>
    <property type="match status" value="1"/>
</dbReference>
<dbReference type="NCBIfam" id="NF002081">
    <property type="entry name" value="PRK00913.3-3"/>
    <property type="match status" value="1"/>
</dbReference>
<dbReference type="PANTHER" id="PTHR11963:SF23">
    <property type="entry name" value="CYTOSOL AMINOPEPTIDASE"/>
    <property type="match status" value="1"/>
</dbReference>
<dbReference type="PANTHER" id="PTHR11963">
    <property type="entry name" value="LEUCINE AMINOPEPTIDASE-RELATED"/>
    <property type="match status" value="1"/>
</dbReference>
<dbReference type="Pfam" id="PF00883">
    <property type="entry name" value="Peptidase_M17"/>
    <property type="match status" value="1"/>
</dbReference>
<dbReference type="Pfam" id="PF02789">
    <property type="entry name" value="Peptidase_M17_N"/>
    <property type="match status" value="1"/>
</dbReference>
<dbReference type="PRINTS" id="PR00481">
    <property type="entry name" value="LAMNOPPTDASE"/>
</dbReference>
<dbReference type="SUPFAM" id="SSF52949">
    <property type="entry name" value="Macro domain-like"/>
    <property type="match status" value="1"/>
</dbReference>
<dbReference type="SUPFAM" id="SSF53187">
    <property type="entry name" value="Zn-dependent exopeptidases"/>
    <property type="match status" value="1"/>
</dbReference>
<dbReference type="PROSITE" id="PS00631">
    <property type="entry name" value="CYTOSOL_AP"/>
    <property type="match status" value="1"/>
</dbReference>
<comment type="function">
    <text evidence="1">Presumably involved in the processing and regular turnover of intracellular proteins. Catalyzes the removal of unsubstituted N-terminal amino acids from various peptides (By similarity).</text>
</comment>
<comment type="catalytic activity">
    <reaction>
        <text>Release of an N-terminal amino acid, Xaa-|-Yaa-, in which Xaa is preferably Leu, but may be other amino acids including Pro although not Arg or Lys, and Yaa may be Pro. Amino acid amides and methyl esters are also readily hydrolyzed, but rates on arylamides are exceedingly low.</text>
        <dbReference type="EC" id="3.4.11.1"/>
    </reaction>
</comment>
<comment type="catalytic activity">
    <reaction>
        <text>Release of an N-terminal amino acid, preferentially leucine, but not glutamic or aspartic acids.</text>
        <dbReference type="EC" id="3.4.11.10"/>
    </reaction>
</comment>
<comment type="cofactor">
    <cofactor evidence="1">
        <name>Mn(2+)</name>
        <dbReference type="ChEBI" id="CHEBI:29035"/>
    </cofactor>
    <text evidence="1">Binds 2 manganese ions per subunit.</text>
</comment>
<comment type="subcellular location">
    <subcellularLocation>
        <location evidence="1">Cytoplasm</location>
    </subcellularLocation>
</comment>
<comment type="similarity">
    <text evidence="3">Belongs to the peptidase M17 family.</text>
</comment>
<organism>
    <name type="scientific">Helicobacter pylori (strain J99 / ATCC 700824)</name>
    <name type="common">Campylobacter pylori J99</name>
    <dbReference type="NCBI Taxonomy" id="85963"/>
    <lineage>
        <taxon>Bacteria</taxon>
        <taxon>Pseudomonadati</taxon>
        <taxon>Campylobacterota</taxon>
        <taxon>Epsilonproteobacteria</taxon>
        <taxon>Campylobacterales</taxon>
        <taxon>Helicobacteraceae</taxon>
        <taxon>Helicobacter</taxon>
    </lineage>
</organism>
<reference key="1">
    <citation type="journal article" date="1999" name="Nature">
        <title>Genomic sequence comparison of two unrelated isolates of the human gastric pathogen Helicobacter pylori.</title>
        <authorList>
            <person name="Alm R.A."/>
            <person name="Ling L.-S.L."/>
            <person name="Moir D.T."/>
            <person name="King B.L."/>
            <person name="Brown E.D."/>
            <person name="Doig P.C."/>
            <person name="Smith D.R."/>
            <person name="Noonan B."/>
            <person name="Guild B.C."/>
            <person name="deJonge B.L."/>
            <person name="Carmel G."/>
            <person name="Tummino P.J."/>
            <person name="Caruso A."/>
            <person name="Uria-Nickelsen M."/>
            <person name="Mills D.M."/>
            <person name="Ives C."/>
            <person name="Gibson R."/>
            <person name="Merberg D."/>
            <person name="Mills S.D."/>
            <person name="Jiang Q."/>
            <person name="Taylor D.E."/>
            <person name="Vovis G.F."/>
            <person name="Trust T.J."/>
        </authorList>
    </citation>
    <scope>NUCLEOTIDE SEQUENCE [LARGE SCALE GENOMIC DNA]</scope>
    <source>
        <strain>J99 / ATCC 700824</strain>
    </source>
</reference>
<proteinExistence type="inferred from homology"/>
<name>AMPA_HELPJ</name>
<keyword id="KW-0031">Aminopeptidase</keyword>
<keyword id="KW-0963">Cytoplasm</keyword>
<keyword id="KW-0378">Hydrolase</keyword>
<keyword id="KW-0464">Manganese</keyword>
<keyword id="KW-0479">Metal-binding</keyword>
<keyword id="KW-0645">Protease</keyword>
<sequence>MLKIKLEKTTFENAKAECSLVFITNKDFDHVWVKNKKLLETFKYEGEGAFLDQENKILYVGVKEDDVHLLRESACLAVRTLKKLAFKSVKVGVYTCDTHAKDNALLENLKALFLGLKLGLYEYDTFKPNKKESVLKEVIVALELHKHCEKTCANSLEKSAKEALKYAEIMTESLNIVRDLVNTPPMIGTPVYMAEVAQKVAKENHLEIHVHDEKFLEEKKMNAFLAVNKASLAVNPPRLIHLVYKPKKAKKKIALVGKGLTYDCGGLSLKPADYMVTMKADKGGGSAVIGLLNALAKLGVEAEVHGIIGATENMIGPAAYKPDDILISKEGKSIEVRNTDAEGRLVLADCLSYAQDLSPDVIVDFATLTGACVVGLGEFTSAIMGHNEELKNLFETSGLESGELLAKLPFNRHLKKLIESKIADVCNISSSRYGGAITAGLFLNEFIRDEFKDKWLHIDIAGPAYVEKEWDVNSFGASGAGVRACTAFVEELLKKA</sequence>
<accession>Q9ZLR1</accession>
<feature type="chain" id="PRO_0000165761" description="Cytosol aminopeptidase">
    <location>
        <begin position="1"/>
        <end position="496"/>
    </location>
</feature>
<feature type="active site" evidence="2">
    <location>
        <position position="270"/>
    </location>
</feature>
<feature type="active site" evidence="2">
    <location>
        <position position="344"/>
    </location>
</feature>
<feature type="binding site" evidence="1">
    <location>
        <position position="258"/>
    </location>
    <ligand>
        <name>Mn(2+)</name>
        <dbReference type="ChEBI" id="CHEBI:29035"/>
        <label>2</label>
    </ligand>
</feature>
<feature type="binding site" evidence="1">
    <location>
        <position position="263"/>
    </location>
    <ligand>
        <name>Mn(2+)</name>
        <dbReference type="ChEBI" id="CHEBI:29035"/>
        <label>1</label>
    </ligand>
</feature>
<feature type="binding site" evidence="1">
    <location>
        <position position="263"/>
    </location>
    <ligand>
        <name>Mn(2+)</name>
        <dbReference type="ChEBI" id="CHEBI:29035"/>
        <label>2</label>
    </ligand>
</feature>
<feature type="binding site" evidence="1">
    <location>
        <position position="281"/>
    </location>
    <ligand>
        <name>Mn(2+)</name>
        <dbReference type="ChEBI" id="CHEBI:29035"/>
        <label>2</label>
    </ligand>
</feature>
<feature type="binding site" evidence="1">
    <location>
        <position position="340"/>
    </location>
    <ligand>
        <name>Mn(2+)</name>
        <dbReference type="ChEBI" id="CHEBI:29035"/>
        <label>1</label>
    </ligand>
</feature>
<feature type="binding site" evidence="1">
    <location>
        <position position="342"/>
    </location>
    <ligand>
        <name>Mn(2+)</name>
        <dbReference type="ChEBI" id="CHEBI:29035"/>
        <label>1</label>
    </ligand>
</feature>
<feature type="binding site" evidence="1">
    <location>
        <position position="342"/>
    </location>
    <ligand>
        <name>Mn(2+)</name>
        <dbReference type="ChEBI" id="CHEBI:29035"/>
        <label>2</label>
    </ligand>
</feature>